<reference key="1">
    <citation type="journal article" date="2005" name="Nucleic Acids Res.">
        <title>Genome dynamics and diversity of Shigella species, the etiologic agents of bacillary dysentery.</title>
        <authorList>
            <person name="Yang F."/>
            <person name="Yang J."/>
            <person name="Zhang X."/>
            <person name="Chen L."/>
            <person name="Jiang Y."/>
            <person name="Yan Y."/>
            <person name="Tang X."/>
            <person name="Wang J."/>
            <person name="Xiong Z."/>
            <person name="Dong J."/>
            <person name="Xue Y."/>
            <person name="Zhu Y."/>
            <person name="Xu X."/>
            <person name="Sun L."/>
            <person name="Chen S."/>
            <person name="Nie H."/>
            <person name="Peng J."/>
            <person name="Xu J."/>
            <person name="Wang Y."/>
            <person name="Yuan Z."/>
            <person name="Wen Y."/>
            <person name="Yao Z."/>
            <person name="Shen Y."/>
            <person name="Qiang B."/>
            <person name="Hou Y."/>
            <person name="Yu J."/>
            <person name="Jin Q."/>
        </authorList>
    </citation>
    <scope>NUCLEOTIDE SEQUENCE [LARGE SCALE GENOMIC DNA]</scope>
    <source>
        <strain>Sd197</strain>
    </source>
</reference>
<organism>
    <name type="scientific">Shigella dysenteriae serotype 1 (strain Sd197)</name>
    <dbReference type="NCBI Taxonomy" id="300267"/>
    <lineage>
        <taxon>Bacteria</taxon>
        <taxon>Pseudomonadati</taxon>
        <taxon>Pseudomonadota</taxon>
        <taxon>Gammaproteobacteria</taxon>
        <taxon>Enterobacterales</taxon>
        <taxon>Enterobacteriaceae</taxon>
        <taxon>Shigella</taxon>
    </lineage>
</organism>
<protein>
    <recommendedName>
        <fullName evidence="1">L-carnitine/gamma-butyrobetaine antiporter</fullName>
    </recommendedName>
</protein>
<dbReference type="EMBL" id="CP000034">
    <property type="protein sequence ID" value="ABB60300.1"/>
    <property type="molecule type" value="Genomic_DNA"/>
</dbReference>
<dbReference type="RefSeq" id="WP_000787133.1">
    <property type="nucleotide sequence ID" value="NC_007606.1"/>
</dbReference>
<dbReference type="RefSeq" id="YP_401789.1">
    <property type="nucleotide sequence ID" value="NC_007606.1"/>
</dbReference>
<dbReference type="SMR" id="Q32K57"/>
<dbReference type="STRING" id="300267.SDY_0062"/>
<dbReference type="EnsemblBacteria" id="ABB60300">
    <property type="protein sequence ID" value="ABB60300"/>
    <property type="gene ID" value="SDY_0062"/>
</dbReference>
<dbReference type="KEGG" id="sdy:SDY_0062"/>
<dbReference type="PATRIC" id="fig|300267.13.peg.68"/>
<dbReference type="HOGENOM" id="CLU_010118_6_0_6"/>
<dbReference type="UniPathway" id="UPA00117"/>
<dbReference type="Proteomes" id="UP000002716">
    <property type="component" value="Chromosome"/>
</dbReference>
<dbReference type="GO" id="GO:0005886">
    <property type="term" value="C:plasma membrane"/>
    <property type="evidence" value="ECO:0007669"/>
    <property type="project" value="UniProtKB-SubCell"/>
</dbReference>
<dbReference type="GO" id="GO:0044667">
    <property type="term" value="F:(R)-carnitine:4-(trimethylammonio)butanoate antiporter activity"/>
    <property type="evidence" value="ECO:0007669"/>
    <property type="project" value="UniProtKB-UniRule"/>
</dbReference>
<dbReference type="GO" id="GO:1900751">
    <property type="term" value="P:4-(trimethylammonio)butanoate transport"/>
    <property type="evidence" value="ECO:0007669"/>
    <property type="project" value="InterPro"/>
</dbReference>
<dbReference type="GO" id="GO:0009437">
    <property type="term" value="P:carnitine metabolic process"/>
    <property type="evidence" value="ECO:0007669"/>
    <property type="project" value="UniProtKB-UniRule"/>
</dbReference>
<dbReference type="HAMAP" id="MF_01049">
    <property type="entry name" value="CaiT"/>
    <property type="match status" value="1"/>
</dbReference>
<dbReference type="InterPro" id="IPR000060">
    <property type="entry name" value="BCCT_transptr"/>
</dbReference>
<dbReference type="InterPro" id="IPR023449">
    <property type="entry name" value="BCCT_transptr_CaiT"/>
</dbReference>
<dbReference type="NCBIfam" id="TIGR00842">
    <property type="entry name" value="bcct"/>
    <property type="match status" value="1"/>
</dbReference>
<dbReference type="NCBIfam" id="NF002887">
    <property type="entry name" value="PRK03356.1"/>
    <property type="match status" value="1"/>
</dbReference>
<dbReference type="PANTHER" id="PTHR30047">
    <property type="entry name" value="HIGH-AFFINITY CHOLINE TRANSPORT PROTEIN-RELATED"/>
    <property type="match status" value="1"/>
</dbReference>
<dbReference type="PANTHER" id="PTHR30047:SF11">
    <property type="entry name" value="L-CARNITINE_GAMMA-BUTYROBETAINE ANTIPORTER"/>
    <property type="match status" value="1"/>
</dbReference>
<dbReference type="Pfam" id="PF02028">
    <property type="entry name" value="BCCT"/>
    <property type="match status" value="1"/>
</dbReference>
<proteinExistence type="inferred from homology"/>
<gene>
    <name evidence="1" type="primary">caiT</name>
    <name type="ordered locus">SDY_0062</name>
</gene>
<name>CAIT_SHIDS</name>
<feature type="chain" id="PRO_1000064335" description="L-carnitine/gamma-butyrobetaine antiporter">
    <location>
        <begin position="1"/>
        <end position="504"/>
    </location>
</feature>
<feature type="transmembrane region" description="Helical" evidence="1">
    <location>
        <begin position="10"/>
        <end position="30"/>
    </location>
</feature>
<feature type="transmembrane region" description="Helical" evidence="1">
    <location>
        <begin position="51"/>
        <end position="71"/>
    </location>
</feature>
<feature type="transmembrane region" description="Helical" evidence="1">
    <location>
        <begin position="92"/>
        <end position="112"/>
    </location>
</feature>
<feature type="transmembrane region" description="Helical" evidence="1">
    <location>
        <begin position="143"/>
        <end position="163"/>
    </location>
</feature>
<feature type="transmembrane region" description="Helical" evidence="1">
    <location>
        <begin position="195"/>
        <end position="215"/>
    </location>
</feature>
<feature type="transmembrane region" description="Helical" evidence="1">
    <location>
        <begin position="231"/>
        <end position="251"/>
    </location>
</feature>
<feature type="transmembrane region" description="Helical" evidence="1">
    <location>
        <begin position="263"/>
        <end position="283"/>
    </location>
</feature>
<feature type="transmembrane region" description="Helical" evidence="1">
    <location>
        <begin position="316"/>
        <end position="336"/>
    </location>
</feature>
<feature type="transmembrane region" description="Helical" evidence="1">
    <location>
        <begin position="347"/>
        <end position="367"/>
    </location>
</feature>
<feature type="transmembrane region" description="Helical" evidence="1">
    <location>
        <begin position="398"/>
        <end position="418"/>
    </location>
</feature>
<feature type="transmembrane region" description="Helical" evidence="1">
    <location>
        <begin position="446"/>
        <end position="466"/>
    </location>
</feature>
<feature type="transmembrane region" description="Helical" evidence="1">
    <location>
        <begin position="475"/>
        <end position="495"/>
    </location>
</feature>
<sequence>MKNEKRKTGMEPKVFFPPLIIVGILCWLTVRDLDAANVVINAVFSYVTNVWGWAFEWYMVVMLFGWFWLVFGPYAKKRLGNEPPEFSTASWIFMMFASCTSAAVLFWGSIEIYYYISTPPFGLEPNSTGAKELGLAYSLFHWGPLPWATYSFLSVAFAYFFFVRKMEVIRPSSTLVPLVGEKHAKGLFGTIVDNFYLVALIFAMGTSLGLATPLVTECMQWLFGIPHTLQLDAIIITCWIILNAICVACGLQKGGRIASDVPSYLSFLMLGWVFIVSGASFIMNYFTDSVGMLLMYLPRMLFYTDPIAKGGFPQGWSVFYWAWWVIYAIQMSIFLARISRGRTVRELCFGMVLGLTASTWILWTVLGSNTLLLIDKNIINIPNLIEQYGVARAIIETWAALPLSTATMWGFFILCFIATVTLVNACSYTLAMSTCREVRGGEEPPLLVRIGWSILVGIIGIVLLALGGLKPIQTAIIAGGCPLFFVNIMVTLSFIKDAKQNWKD</sequence>
<comment type="function">
    <text evidence="1">Catalyzes the exchange of L-carnitine for gamma-butyrobetaine.</text>
</comment>
<comment type="catalytic activity">
    <reaction evidence="1">
        <text>4-(trimethylamino)butanoate(in) + (R)-carnitine(out) = 4-(trimethylamino)butanoate(out) + (R)-carnitine(in)</text>
        <dbReference type="Rhea" id="RHEA:29427"/>
        <dbReference type="ChEBI" id="CHEBI:16244"/>
        <dbReference type="ChEBI" id="CHEBI:16347"/>
    </reaction>
</comment>
<comment type="pathway">
    <text evidence="1">Amine and polyamine metabolism; carnitine metabolism.</text>
</comment>
<comment type="subunit">
    <text evidence="1">Homotrimer.</text>
</comment>
<comment type="subcellular location">
    <subcellularLocation>
        <location evidence="1">Cell inner membrane</location>
        <topology evidence="1">Multi-pass membrane protein</topology>
    </subcellularLocation>
</comment>
<comment type="similarity">
    <text evidence="1">Belongs to the BCCT transporter (TC 2.A.15) family. CaiT subfamily.</text>
</comment>
<keyword id="KW-0050">Antiport</keyword>
<keyword id="KW-0997">Cell inner membrane</keyword>
<keyword id="KW-1003">Cell membrane</keyword>
<keyword id="KW-0472">Membrane</keyword>
<keyword id="KW-1185">Reference proteome</keyword>
<keyword id="KW-0812">Transmembrane</keyword>
<keyword id="KW-1133">Transmembrane helix</keyword>
<keyword id="KW-0813">Transport</keyword>
<accession>Q32K57</accession>
<evidence type="ECO:0000255" key="1">
    <source>
        <dbReference type="HAMAP-Rule" id="MF_01049"/>
    </source>
</evidence>